<keyword id="KW-0150">Chloroplast</keyword>
<keyword id="KW-0472">Membrane</keyword>
<keyword id="KW-0602">Photosynthesis</keyword>
<keyword id="KW-0604">Photosystem II</keyword>
<keyword id="KW-0934">Plastid</keyword>
<keyword id="KW-0674">Reaction center</keyword>
<keyword id="KW-0691">RNA editing</keyword>
<keyword id="KW-0793">Thylakoid</keyword>
<keyword id="KW-0812">Transmembrane</keyword>
<keyword id="KW-1133">Transmembrane helix</keyword>
<feature type="chain" id="PRO_0000219767" description="Photosystem II reaction center protein L">
    <location>
        <begin position="1"/>
        <end position="38"/>
    </location>
</feature>
<feature type="transmembrane region" description="Helical" evidence="2">
    <location>
        <begin position="17"/>
        <end position="37"/>
    </location>
</feature>
<organism>
    <name type="scientific">Saururus cernuus</name>
    <name type="common">Lizard's tail</name>
    <dbReference type="NCBI Taxonomy" id="13260"/>
    <lineage>
        <taxon>Eukaryota</taxon>
        <taxon>Viridiplantae</taxon>
        <taxon>Streptophyta</taxon>
        <taxon>Embryophyta</taxon>
        <taxon>Tracheophyta</taxon>
        <taxon>Spermatophyta</taxon>
        <taxon>Magnoliopsida</taxon>
        <taxon>Magnoliidae</taxon>
        <taxon>Piperales</taxon>
        <taxon>Saururaceae</taxon>
        <taxon>Saururus</taxon>
    </lineage>
</organism>
<comment type="function">
    <text evidence="2">One of the components of the core complex of photosystem II (PSII). PSII is a light-driven water:plastoquinone oxidoreductase that uses light energy to abstract electrons from H(2)O, generating O(2) and a proton gradient subsequently used for ATP formation. It consists of a core antenna complex that captures photons, and an electron transfer chain that converts photonic excitation into a charge separation. This subunit is found at the monomer-monomer interface and is required for correct PSII assembly and/or dimerization.</text>
</comment>
<comment type="subunit">
    <text evidence="2">PSII is composed of 1 copy each of membrane proteins PsbA, PsbB, PsbC, PsbD, PsbE, PsbF, PsbH, PsbI, PsbJ, PsbK, PsbL, PsbM, PsbT, PsbX, PsbY, PsbZ, Psb30/Ycf12, at least 3 peripheral proteins of the oxygen-evolving complex and a large number of cofactors. It forms dimeric complexes.</text>
</comment>
<comment type="subcellular location">
    <subcellularLocation>
        <location evidence="2">Plastid</location>
        <location evidence="2">Chloroplast thylakoid membrane</location>
        <topology evidence="2">Single-pass membrane protein</topology>
    </subcellularLocation>
</comment>
<comment type="RNA editing">
    <location>
        <position position="1" evidence="1"/>
    </location>
    <text evidence="1">The initiator methionine is created by RNA editing.</text>
</comment>
<comment type="similarity">
    <text evidence="2">Belongs to the PsbL family.</text>
</comment>
<gene>
    <name evidence="2" type="primary">psbL</name>
</gene>
<geneLocation type="chloroplast"/>
<dbReference type="EMBL" id="AF123841">
    <property type="protein sequence ID" value="AAG26244.1"/>
    <property type="molecule type" value="Genomic_DNA"/>
</dbReference>
<dbReference type="RefSeq" id="YP_011086828.1">
    <property type="nucleotide sequence ID" value="NC_087887.1"/>
</dbReference>
<dbReference type="SMR" id="P60136"/>
<dbReference type="GeneID" id="89433373"/>
<dbReference type="GO" id="GO:0009535">
    <property type="term" value="C:chloroplast thylakoid membrane"/>
    <property type="evidence" value="ECO:0007669"/>
    <property type="project" value="UniProtKB-SubCell"/>
</dbReference>
<dbReference type="GO" id="GO:0009539">
    <property type="term" value="C:photosystem II reaction center"/>
    <property type="evidence" value="ECO:0007669"/>
    <property type="project" value="InterPro"/>
</dbReference>
<dbReference type="GO" id="GO:0015979">
    <property type="term" value="P:photosynthesis"/>
    <property type="evidence" value="ECO:0007669"/>
    <property type="project" value="UniProtKB-UniRule"/>
</dbReference>
<dbReference type="HAMAP" id="MF_01317">
    <property type="entry name" value="PSII_PsbL"/>
    <property type="match status" value="1"/>
</dbReference>
<dbReference type="InterPro" id="IPR003372">
    <property type="entry name" value="PSII_PsbL"/>
</dbReference>
<dbReference type="InterPro" id="IPR037266">
    <property type="entry name" value="PSII_PsbL_sf"/>
</dbReference>
<dbReference type="NCBIfam" id="NF001972">
    <property type="entry name" value="PRK00753.1"/>
    <property type="match status" value="1"/>
</dbReference>
<dbReference type="Pfam" id="PF02419">
    <property type="entry name" value="PsbL"/>
    <property type="match status" value="1"/>
</dbReference>
<dbReference type="SUPFAM" id="SSF161017">
    <property type="entry name" value="Photosystem II reaction center protein L, PsbL"/>
    <property type="match status" value="1"/>
</dbReference>
<name>PSBL_SAUCE</name>
<evidence type="ECO:0000250" key="1"/>
<evidence type="ECO:0000255" key="2">
    <source>
        <dbReference type="HAMAP-Rule" id="MF_01317"/>
    </source>
</evidence>
<accession>P60136</accession>
<accession>P29301</accession>
<protein>
    <recommendedName>
        <fullName evidence="2">Photosystem II reaction center protein L</fullName>
        <shortName evidence="2">PSII-L</shortName>
    </recommendedName>
</protein>
<proteinExistence type="inferred from homology"/>
<reference key="1">
    <citation type="journal article" date="2000" name="Am. J. Bot.">
        <title>Utility of 17 chloroplast genes for inferring the phylogeny of the basal angiosperms.</title>
        <authorList>
            <person name="Graham S.W."/>
            <person name="Olmstead R.G."/>
        </authorList>
    </citation>
    <scope>NUCLEOTIDE SEQUENCE [GENOMIC DNA]</scope>
</reference>
<sequence>MTQSNPNEQSVELNRTSLYWGLLLIFVLAVLFSNYFFN</sequence>